<keyword id="KW-0938">Abscisic acid signaling pathway</keyword>
<keyword id="KW-0963">Cytoplasm</keyword>
<keyword id="KW-0479">Metal-binding</keyword>
<keyword id="KW-0539">Nucleus</keyword>
<keyword id="KW-1185">Reference proteome</keyword>
<keyword id="KW-0346">Stress response</keyword>
<keyword id="KW-0808">Transferase</keyword>
<keyword id="KW-0833">Ubl conjugation pathway</keyword>
<keyword id="KW-0862">Zinc</keyword>
<keyword id="KW-0863">Zinc-finger</keyword>
<organism>
    <name type="scientific">Arabidopsis thaliana</name>
    <name type="common">Mouse-ear cress</name>
    <dbReference type="NCBI Taxonomy" id="3702"/>
    <lineage>
        <taxon>Eukaryota</taxon>
        <taxon>Viridiplantae</taxon>
        <taxon>Streptophyta</taxon>
        <taxon>Embryophyta</taxon>
        <taxon>Tracheophyta</taxon>
        <taxon>Spermatophyta</taxon>
        <taxon>Magnoliopsida</taxon>
        <taxon>eudicotyledons</taxon>
        <taxon>Gunneridae</taxon>
        <taxon>Pentapetalae</taxon>
        <taxon>rosids</taxon>
        <taxon>malvids</taxon>
        <taxon>Brassicales</taxon>
        <taxon>Brassicaceae</taxon>
        <taxon>Camelineae</taxon>
        <taxon>Arabidopsis</taxon>
    </lineage>
</organism>
<dbReference type="EC" id="2.3.2.27" evidence="6"/>
<dbReference type="EMBL" id="AL133314">
    <property type="protein sequence ID" value="CAB62332.1"/>
    <property type="molecule type" value="Genomic_DNA"/>
</dbReference>
<dbReference type="EMBL" id="CP002686">
    <property type="protein sequence ID" value="AEE78184.1"/>
    <property type="molecule type" value="Genomic_DNA"/>
</dbReference>
<dbReference type="EMBL" id="AY093203">
    <property type="protein sequence ID" value="AAM13202.1"/>
    <property type="molecule type" value="mRNA"/>
</dbReference>
<dbReference type="EMBL" id="BT008859">
    <property type="protein sequence ID" value="AAP68298.1"/>
    <property type="molecule type" value="mRNA"/>
</dbReference>
<dbReference type="PIR" id="T45599">
    <property type="entry name" value="T45599"/>
</dbReference>
<dbReference type="RefSeq" id="NP_190246.1">
    <property type="nucleotide sequence ID" value="NM_114529.6"/>
</dbReference>
<dbReference type="SMR" id="Q9SNB6"/>
<dbReference type="FunCoup" id="Q9SNB6">
    <property type="interactions" value="66"/>
</dbReference>
<dbReference type="STRING" id="3702.Q9SNB6"/>
<dbReference type="iPTMnet" id="Q9SNB6"/>
<dbReference type="PaxDb" id="3702-AT3G46620.1"/>
<dbReference type="ProteomicsDB" id="235013"/>
<dbReference type="EnsemblPlants" id="AT3G46620.1">
    <property type="protein sequence ID" value="AT3G46620.1"/>
    <property type="gene ID" value="AT3G46620"/>
</dbReference>
<dbReference type="GeneID" id="823815"/>
<dbReference type="Gramene" id="AT3G46620.1">
    <property type="protein sequence ID" value="AT3G46620.1"/>
    <property type="gene ID" value="AT3G46620"/>
</dbReference>
<dbReference type="KEGG" id="ath:AT3G46620"/>
<dbReference type="Araport" id="AT3G46620"/>
<dbReference type="TAIR" id="AT3G46620">
    <property type="gene designation" value="RDUF1"/>
</dbReference>
<dbReference type="eggNOG" id="KOG0800">
    <property type="taxonomic scope" value="Eukaryota"/>
</dbReference>
<dbReference type="HOGENOM" id="CLU_040377_0_0_1"/>
<dbReference type="InParanoid" id="Q9SNB6"/>
<dbReference type="OMA" id="ILIGACH"/>
<dbReference type="PhylomeDB" id="Q9SNB6"/>
<dbReference type="UniPathway" id="UPA00143"/>
<dbReference type="PRO" id="PR:Q9SNB6"/>
<dbReference type="Proteomes" id="UP000006548">
    <property type="component" value="Chromosome 3"/>
</dbReference>
<dbReference type="ExpressionAtlas" id="Q9SNB6">
    <property type="expression patterns" value="baseline and differential"/>
</dbReference>
<dbReference type="GO" id="GO:0005737">
    <property type="term" value="C:cytoplasm"/>
    <property type="evidence" value="ECO:0000314"/>
    <property type="project" value="TAIR"/>
</dbReference>
<dbReference type="GO" id="GO:0005829">
    <property type="term" value="C:cytosol"/>
    <property type="evidence" value="ECO:0007669"/>
    <property type="project" value="UniProtKB-SubCell"/>
</dbReference>
<dbReference type="GO" id="GO:0005634">
    <property type="term" value="C:nucleus"/>
    <property type="evidence" value="ECO:0000314"/>
    <property type="project" value="TAIR"/>
</dbReference>
<dbReference type="GO" id="GO:0061630">
    <property type="term" value="F:ubiquitin protein ligase activity"/>
    <property type="evidence" value="ECO:0007669"/>
    <property type="project" value="InterPro"/>
</dbReference>
<dbReference type="GO" id="GO:0004842">
    <property type="term" value="F:ubiquitin-protein transferase activity"/>
    <property type="evidence" value="ECO:0000314"/>
    <property type="project" value="TAIR"/>
</dbReference>
<dbReference type="GO" id="GO:0008270">
    <property type="term" value="F:zinc ion binding"/>
    <property type="evidence" value="ECO:0007669"/>
    <property type="project" value="UniProtKB-KW"/>
</dbReference>
<dbReference type="GO" id="GO:0009738">
    <property type="term" value="P:abscisic acid-activated signaling pathway"/>
    <property type="evidence" value="ECO:0007669"/>
    <property type="project" value="UniProtKB-KW"/>
</dbReference>
<dbReference type="GO" id="GO:0051865">
    <property type="term" value="P:protein autoubiquitination"/>
    <property type="evidence" value="ECO:0000314"/>
    <property type="project" value="TAIR"/>
</dbReference>
<dbReference type="GO" id="GO:0009737">
    <property type="term" value="P:response to abscisic acid"/>
    <property type="evidence" value="ECO:0000315"/>
    <property type="project" value="TAIR"/>
</dbReference>
<dbReference type="GO" id="GO:0009414">
    <property type="term" value="P:response to water deprivation"/>
    <property type="evidence" value="ECO:0000315"/>
    <property type="project" value="TAIR"/>
</dbReference>
<dbReference type="FunFam" id="3.30.40.10:FF:000022">
    <property type="entry name" value="E3 ubiquitin-protein ligase RING1-like"/>
    <property type="match status" value="1"/>
</dbReference>
<dbReference type="Gene3D" id="3.30.40.10">
    <property type="entry name" value="Zinc/RING finger domain, C3HC4 (zinc finger)"/>
    <property type="match status" value="1"/>
</dbReference>
<dbReference type="InterPro" id="IPR010543">
    <property type="entry name" value="DUF1117"/>
</dbReference>
<dbReference type="InterPro" id="IPR039525">
    <property type="entry name" value="RNF126-like_zinc-ribbon"/>
</dbReference>
<dbReference type="InterPro" id="IPR001841">
    <property type="entry name" value="Znf_RING"/>
</dbReference>
<dbReference type="InterPro" id="IPR013083">
    <property type="entry name" value="Znf_RING/FYVE/PHD"/>
</dbReference>
<dbReference type="PANTHER" id="PTHR15710">
    <property type="entry name" value="E3 UBIQUITIN-PROTEIN LIGASE PRAJA"/>
    <property type="match status" value="1"/>
</dbReference>
<dbReference type="PANTHER" id="PTHR15710:SF225">
    <property type="entry name" value="E3 UBIQUITIN-PROTEIN LIGASE RDUF1"/>
    <property type="match status" value="1"/>
</dbReference>
<dbReference type="Pfam" id="PF06547">
    <property type="entry name" value="DUF1117"/>
    <property type="match status" value="1"/>
</dbReference>
<dbReference type="Pfam" id="PF13639">
    <property type="entry name" value="zf-RING_2"/>
    <property type="match status" value="1"/>
</dbReference>
<dbReference type="Pfam" id="PF14369">
    <property type="entry name" value="Zn_ribbon_19"/>
    <property type="match status" value="1"/>
</dbReference>
<dbReference type="SMART" id="SM00184">
    <property type="entry name" value="RING"/>
    <property type="match status" value="1"/>
</dbReference>
<dbReference type="SUPFAM" id="SSF57850">
    <property type="entry name" value="RING/U-box"/>
    <property type="match status" value="1"/>
</dbReference>
<dbReference type="PROSITE" id="PS50089">
    <property type="entry name" value="ZF_RING_2"/>
    <property type="match status" value="1"/>
</dbReference>
<gene>
    <name evidence="5" type="primary">RDUF1</name>
    <name evidence="7" type="ordered locus">At3g46620</name>
    <name evidence="8" type="ORF">F12A12.140</name>
</gene>
<comment type="function">
    <text evidence="3 4">E3 ubiquitin-protein ligase involved in the positive regulation of abscisic acid-dependent drought stress responses (PubMed:22405823). Involved in the positive regulation of responses to salt and osmotic stresses during seed germination and early seedling development (PubMed:23951086). Possesses E3 ubiquitin ligase activity in vitro (PubMed:22405823, PubMed:23951086).</text>
</comment>
<comment type="catalytic activity">
    <reaction evidence="6">
        <text>S-ubiquitinyl-[E2 ubiquitin-conjugating enzyme]-L-cysteine + [acceptor protein]-L-lysine = [E2 ubiquitin-conjugating enzyme]-L-cysteine + N(6)-ubiquitinyl-[acceptor protein]-L-lysine.</text>
        <dbReference type="EC" id="2.3.2.27"/>
    </reaction>
</comment>
<comment type="pathway">
    <text evidence="6">Protein modification; protein ubiquitination.</text>
</comment>
<comment type="subcellular location">
    <subcellularLocation>
        <location evidence="4">Cytoplasm</location>
        <location evidence="4">Cytosol</location>
    </subcellularLocation>
    <subcellularLocation>
        <location evidence="4">Nucleus</location>
    </subcellularLocation>
</comment>
<comment type="tissue specificity">
    <text evidence="4">Expressed in root tips, leaf tips, junction of carpels and pedicels, stigma, anthers, pollen, vasculature of sepals and petals, immature seeds and embryos.</text>
</comment>
<comment type="induction">
    <text evidence="3">Induced by abscisic acid (ABA), and drought and salt stresses.</text>
</comment>
<comment type="disruption phenotype">
    <text evidence="3 4">No visible phenotype under normal growth conditions (PubMed:22405823, PubMed:23951086). Mutant plants have decreased sensitivity to abscisic acid (ABA) and reduced tolerance to drought stress (PubMed:22405823).</text>
</comment>
<comment type="miscellaneous">
    <text evidence="4">Plants over-expressing RDUF1 display decreased sensitivity to salt and osmotic stresses.</text>
</comment>
<proteinExistence type="evidence at protein level"/>
<sequence>MMPNSRSATITPTTESTTTTTTTTTTLTTSYWCYSCTRFISVWEDQDANAGVLCPYCNGGFIEEIEDSSNSTVAAIPASTPEVRSVEETHRSIIRRRRSNRRTSFNPVIVLHGGGGGGAGERVENEEGDGATRERRAYEFYYDDGSGSGLRPLPDSVSEILMGSGFERLLEQLSQIEASGNGIGRSGNPPASKSAIESLPRVEISDCHTKAEANCAVCTEVFEAGIEGREMPCKHIFHGDCIVPWLSIRNSCPVCRFELPSDPIQRSNEEEHAVGMTIWRLPGGGFAVGRFNAGVREGERILPVVLTEMDGGGLGSNEGPRRISWVRAHETPEMSRNGGRSGNGGRLRRAVRGMVSFMRRVRPSRGSSNSNVIDLDSDGETRVMNRSTSLIRRFF</sequence>
<name>RDUF1_ARATH</name>
<reference key="1">
    <citation type="journal article" date="2000" name="Nature">
        <title>Sequence and analysis of chromosome 3 of the plant Arabidopsis thaliana.</title>
        <authorList>
            <person name="Salanoubat M."/>
            <person name="Lemcke K."/>
            <person name="Rieger M."/>
            <person name="Ansorge W."/>
            <person name="Unseld M."/>
            <person name="Fartmann B."/>
            <person name="Valle G."/>
            <person name="Bloecker H."/>
            <person name="Perez-Alonso M."/>
            <person name="Obermaier B."/>
            <person name="Delseny M."/>
            <person name="Boutry M."/>
            <person name="Grivell L.A."/>
            <person name="Mache R."/>
            <person name="Puigdomenech P."/>
            <person name="De Simone V."/>
            <person name="Choisne N."/>
            <person name="Artiguenave F."/>
            <person name="Robert C."/>
            <person name="Brottier P."/>
            <person name="Wincker P."/>
            <person name="Cattolico L."/>
            <person name="Weissenbach J."/>
            <person name="Saurin W."/>
            <person name="Quetier F."/>
            <person name="Schaefer M."/>
            <person name="Mueller-Auer S."/>
            <person name="Gabel C."/>
            <person name="Fuchs M."/>
            <person name="Benes V."/>
            <person name="Wurmbach E."/>
            <person name="Drzonek H."/>
            <person name="Erfle H."/>
            <person name="Jordan N."/>
            <person name="Bangert S."/>
            <person name="Wiedelmann R."/>
            <person name="Kranz H."/>
            <person name="Voss H."/>
            <person name="Holland R."/>
            <person name="Brandt P."/>
            <person name="Nyakatura G."/>
            <person name="Vezzi A."/>
            <person name="D'Angelo M."/>
            <person name="Pallavicini A."/>
            <person name="Toppo S."/>
            <person name="Simionati B."/>
            <person name="Conrad A."/>
            <person name="Hornischer K."/>
            <person name="Kauer G."/>
            <person name="Loehnert T.-H."/>
            <person name="Nordsiek G."/>
            <person name="Reichelt J."/>
            <person name="Scharfe M."/>
            <person name="Schoen O."/>
            <person name="Bargues M."/>
            <person name="Terol J."/>
            <person name="Climent J."/>
            <person name="Navarro P."/>
            <person name="Collado C."/>
            <person name="Perez-Perez A."/>
            <person name="Ottenwaelder B."/>
            <person name="Duchemin D."/>
            <person name="Cooke R."/>
            <person name="Laudie M."/>
            <person name="Berger-Llauro C."/>
            <person name="Purnelle B."/>
            <person name="Masuy D."/>
            <person name="de Haan M."/>
            <person name="Maarse A.C."/>
            <person name="Alcaraz J.-P."/>
            <person name="Cottet A."/>
            <person name="Casacuberta E."/>
            <person name="Monfort A."/>
            <person name="Argiriou A."/>
            <person name="Flores M."/>
            <person name="Liguori R."/>
            <person name="Vitale D."/>
            <person name="Mannhaupt G."/>
            <person name="Haase D."/>
            <person name="Schoof H."/>
            <person name="Rudd S."/>
            <person name="Zaccaria P."/>
            <person name="Mewes H.-W."/>
            <person name="Mayer K.F.X."/>
            <person name="Kaul S."/>
            <person name="Town C.D."/>
            <person name="Koo H.L."/>
            <person name="Tallon L.J."/>
            <person name="Jenkins J."/>
            <person name="Rooney T."/>
            <person name="Rizzo M."/>
            <person name="Walts A."/>
            <person name="Utterback T."/>
            <person name="Fujii C.Y."/>
            <person name="Shea T.P."/>
            <person name="Creasy T.H."/>
            <person name="Haas B."/>
            <person name="Maiti R."/>
            <person name="Wu D."/>
            <person name="Peterson J."/>
            <person name="Van Aken S."/>
            <person name="Pai G."/>
            <person name="Militscher J."/>
            <person name="Sellers P."/>
            <person name="Gill J.E."/>
            <person name="Feldblyum T.V."/>
            <person name="Preuss D."/>
            <person name="Lin X."/>
            <person name="Nierman W.C."/>
            <person name="Salzberg S.L."/>
            <person name="White O."/>
            <person name="Venter J.C."/>
            <person name="Fraser C.M."/>
            <person name="Kaneko T."/>
            <person name="Nakamura Y."/>
            <person name="Sato S."/>
            <person name="Kato T."/>
            <person name="Asamizu E."/>
            <person name="Sasamoto S."/>
            <person name="Kimura T."/>
            <person name="Idesawa K."/>
            <person name="Kawashima K."/>
            <person name="Kishida Y."/>
            <person name="Kiyokawa C."/>
            <person name="Kohara M."/>
            <person name="Matsumoto M."/>
            <person name="Matsuno A."/>
            <person name="Muraki A."/>
            <person name="Nakayama S."/>
            <person name="Nakazaki N."/>
            <person name="Shinpo S."/>
            <person name="Takeuchi C."/>
            <person name="Wada T."/>
            <person name="Watanabe A."/>
            <person name="Yamada M."/>
            <person name="Yasuda M."/>
            <person name="Tabata S."/>
        </authorList>
    </citation>
    <scope>NUCLEOTIDE SEQUENCE [LARGE SCALE GENOMIC DNA]</scope>
    <source>
        <strain>cv. Columbia</strain>
    </source>
</reference>
<reference key="2">
    <citation type="journal article" date="2017" name="Plant J.">
        <title>Araport11: a complete reannotation of the Arabidopsis thaliana reference genome.</title>
        <authorList>
            <person name="Cheng C.Y."/>
            <person name="Krishnakumar V."/>
            <person name="Chan A.P."/>
            <person name="Thibaud-Nissen F."/>
            <person name="Schobel S."/>
            <person name="Town C.D."/>
        </authorList>
    </citation>
    <scope>GENOME REANNOTATION</scope>
    <source>
        <strain>cv. Columbia</strain>
    </source>
</reference>
<reference key="3">
    <citation type="journal article" date="2003" name="Science">
        <title>Empirical analysis of transcriptional activity in the Arabidopsis genome.</title>
        <authorList>
            <person name="Yamada K."/>
            <person name="Lim J."/>
            <person name="Dale J.M."/>
            <person name="Chen H."/>
            <person name="Shinn P."/>
            <person name="Palm C.J."/>
            <person name="Southwick A.M."/>
            <person name="Wu H.C."/>
            <person name="Kim C.J."/>
            <person name="Nguyen M."/>
            <person name="Pham P.K."/>
            <person name="Cheuk R.F."/>
            <person name="Karlin-Newmann G."/>
            <person name="Liu S.X."/>
            <person name="Lam B."/>
            <person name="Sakano H."/>
            <person name="Wu T."/>
            <person name="Yu G."/>
            <person name="Miranda M."/>
            <person name="Quach H.L."/>
            <person name="Tripp M."/>
            <person name="Chang C.H."/>
            <person name="Lee J.M."/>
            <person name="Toriumi M.J."/>
            <person name="Chan M.M."/>
            <person name="Tang C.C."/>
            <person name="Onodera C.S."/>
            <person name="Deng J.M."/>
            <person name="Akiyama K."/>
            <person name="Ansari Y."/>
            <person name="Arakawa T."/>
            <person name="Banh J."/>
            <person name="Banno F."/>
            <person name="Bowser L."/>
            <person name="Brooks S.Y."/>
            <person name="Carninci P."/>
            <person name="Chao Q."/>
            <person name="Choy N."/>
            <person name="Enju A."/>
            <person name="Goldsmith A.D."/>
            <person name="Gurjal M."/>
            <person name="Hansen N.F."/>
            <person name="Hayashizaki Y."/>
            <person name="Johnson-Hopson C."/>
            <person name="Hsuan V.W."/>
            <person name="Iida K."/>
            <person name="Karnes M."/>
            <person name="Khan S."/>
            <person name="Koesema E."/>
            <person name="Ishida J."/>
            <person name="Jiang P.X."/>
            <person name="Jones T."/>
            <person name="Kawai J."/>
            <person name="Kamiya A."/>
            <person name="Meyers C."/>
            <person name="Nakajima M."/>
            <person name="Narusaka M."/>
            <person name="Seki M."/>
            <person name="Sakurai T."/>
            <person name="Satou M."/>
            <person name="Tamse R."/>
            <person name="Vaysberg M."/>
            <person name="Wallender E.K."/>
            <person name="Wong C."/>
            <person name="Yamamura Y."/>
            <person name="Yuan S."/>
            <person name="Shinozaki K."/>
            <person name="Davis R.W."/>
            <person name="Theologis A."/>
            <person name="Ecker J.R."/>
        </authorList>
    </citation>
    <scope>NUCLEOTIDE SEQUENCE [LARGE SCALE MRNA]</scope>
    <source>
        <strain>cv. Columbia</strain>
    </source>
</reference>
<reference key="4">
    <citation type="journal article" date="2012" name="Biochem. Biophys. Res. Commun.">
        <title>Suppression of Arabidopsis RING-DUF1117 E3 ubiquitin ligases, AtRDUF1 and AtRDUF2, reduces tolerance to ABA-mediated drought stress.</title>
        <authorList>
            <person name="Kim S.J."/>
            <person name="Ryu M.Y."/>
            <person name="Kim W.T."/>
        </authorList>
    </citation>
    <scope>FUNCTION</scope>
    <scope>INDUCTION</scope>
    <scope>MUTAGENESIS OF CYS-255</scope>
    <scope>DISRUPTION PHENOTYPE</scope>
</reference>
<reference key="5">
    <citation type="journal article" date="2013" name="PLoS ONE">
        <title>The E3 ligase AtRDUF1 positively regulates salt stress responses in Arabidopsis thaliana.</title>
        <authorList>
            <person name="Li J."/>
            <person name="Han Y."/>
            <person name="Zhao Q."/>
            <person name="Li C."/>
            <person name="Xie Q."/>
            <person name="Chong K."/>
            <person name="Xu Y."/>
        </authorList>
    </citation>
    <scope>FUNCTION</scope>
    <scope>SUBCELLULAR LOCATION</scope>
    <scope>TISSUE SPECIFICITY</scope>
</reference>
<evidence type="ECO:0000255" key="1">
    <source>
        <dbReference type="PROSITE-ProRule" id="PRU00175"/>
    </source>
</evidence>
<evidence type="ECO:0000256" key="2">
    <source>
        <dbReference type="SAM" id="MobiDB-lite"/>
    </source>
</evidence>
<evidence type="ECO:0000269" key="3">
    <source>
    </source>
</evidence>
<evidence type="ECO:0000269" key="4">
    <source>
    </source>
</evidence>
<evidence type="ECO:0000303" key="5">
    <source>
    </source>
</evidence>
<evidence type="ECO:0000305" key="6"/>
<evidence type="ECO:0000312" key="7">
    <source>
        <dbReference type="Araport" id="AT3G46620"/>
    </source>
</evidence>
<evidence type="ECO:0000312" key="8">
    <source>
        <dbReference type="EMBL" id="CAB62332.1"/>
    </source>
</evidence>
<feature type="chain" id="PRO_0000436412" description="E3 ubiquitin-protein ligase RDUF1">
    <location>
        <begin position="1"/>
        <end position="395"/>
    </location>
</feature>
<feature type="zinc finger region" description="RING-type; atypical" evidence="1">
    <location>
        <begin position="215"/>
        <end position="256"/>
    </location>
</feature>
<feature type="region of interest" description="Disordered" evidence="2">
    <location>
        <begin position="1"/>
        <end position="22"/>
    </location>
</feature>
<feature type="region of interest" description="Disordered" evidence="2">
    <location>
        <begin position="107"/>
        <end position="130"/>
    </location>
</feature>
<feature type="compositionally biased region" description="Low complexity" evidence="2">
    <location>
        <begin position="9"/>
        <end position="22"/>
    </location>
</feature>
<feature type="compositionally biased region" description="Basic and acidic residues" evidence="2">
    <location>
        <begin position="121"/>
        <end position="130"/>
    </location>
</feature>
<feature type="mutagenesis site" description="Loss of E3 ubiquitin ligase activity." evidence="3">
    <original>C</original>
    <variation>S</variation>
    <location>
        <position position="255"/>
    </location>
</feature>
<protein>
    <recommendedName>
        <fullName evidence="6">E3 ubiquitin-protein ligase RDUF1</fullName>
        <ecNumber evidence="6">2.3.2.27</ecNumber>
    </recommendedName>
    <alternativeName>
        <fullName evidence="6">RING and DUF1117 domain-containing protein 1</fullName>
        <shortName evidence="5">AtRDUF1</shortName>
    </alternativeName>
    <alternativeName>
        <fullName evidence="6">RING-type E3 ubiquitin transferase RDUF1</fullName>
    </alternativeName>
</protein>
<accession>Q9SNB6</accession>